<protein>
    <recommendedName>
        <fullName evidence="1">ATP-dependent protease subunit HslV</fullName>
        <ecNumber evidence="1">3.4.25.2</ecNumber>
    </recommendedName>
</protein>
<accession>A6QAX2</accession>
<name>HSLV_SULNB</name>
<evidence type="ECO:0000255" key="1">
    <source>
        <dbReference type="HAMAP-Rule" id="MF_00248"/>
    </source>
</evidence>
<keyword id="KW-0021">Allosteric enzyme</keyword>
<keyword id="KW-0963">Cytoplasm</keyword>
<keyword id="KW-0378">Hydrolase</keyword>
<keyword id="KW-0479">Metal-binding</keyword>
<keyword id="KW-0645">Protease</keyword>
<keyword id="KW-0915">Sodium</keyword>
<keyword id="KW-0888">Threonine protease</keyword>
<organism>
    <name type="scientific">Sulfurovum sp. (strain NBC37-1)</name>
    <dbReference type="NCBI Taxonomy" id="387093"/>
    <lineage>
        <taxon>Bacteria</taxon>
        <taxon>Pseudomonadati</taxon>
        <taxon>Campylobacterota</taxon>
        <taxon>Epsilonproteobacteria</taxon>
        <taxon>Campylobacterales</taxon>
        <taxon>Sulfurovaceae</taxon>
        <taxon>Sulfurovum</taxon>
    </lineage>
</organism>
<reference key="1">
    <citation type="journal article" date="2007" name="Proc. Natl. Acad. Sci. U.S.A.">
        <title>Deep-sea vent epsilon-proteobacterial genomes provide insights into emergence of pathogens.</title>
        <authorList>
            <person name="Nakagawa S."/>
            <person name="Takaki Y."/>
            <person name="Shimamura S."/>
            <person name="Reysenbach A.-L."/>
            <person name="Takai K."/>
            <person name="Horikoshi K."/>
        </authorList>
    </citation>
    <scope>NUCLEOTIDE SEQUENCE [LARGE SCALE GENOMIC DNA]</scope>
    <source>
        <strain>NBC37-1</strain>
    </source>
</reference>
<feature type="chain" id="PRO_1000012685" description="ATP-dependent protease subunit HslV">
    <location>
        <begin position="1"/>
        <end position="176"/>
    </location>
</feature>
<feature type="active site" evidence="1">
    <location>
        <position position="5"/>
    </location>
</feature>
<feature type="binding site" evidence="1">
    <location>
        <position position="161"/>
    </location>
    <ligand>
        <name>Na(+)</name>
        <dbReference type="ChEBI" id="CHEBI:29101"/>
    </ligand>
</feature>
<feature type="binding site" evidence="1">
    <location>
        <position position="164"/>
    </location>
    <ligand>
        <name>Na(+)</name>
        <dbReference type="ChEBI" id="CHEBI:29101"/>
    </ligand>
</feature>
<feature type="binding site" evidence="1">
    <location>
        <position position="167"/>
    </location>
    <ligand>
        <name>Na(+)</name>
        <dbReference type="ChEBI" id="CHEBI:29101"/>
    </ligand>
</feature>
<proteinExistence type="inferred from homology"/>
<sequence length="176" mass="19088">MFDATTILGYKADGKAVIGGDGQVTFGDTVLKSNATKIRTLYEGKILAGFAGSTADAFNLFDMFEGILAEKRGDLFKSVIGFSKMWRKDKHLRQLEAMMIVLNTEHIFILSGTGDVVEPQDGKIAAIGSGGNYAISAARALDKHANLEPRELVQESLEVAGDLCIYTNKNIKILEL</sequence>
<gene>
    <name evidence="1" type="primary">hslV</name>
    <name type="ordered locus">SUN_1681</name>
</gene>
<dbReference type="EC" id="3.4.25.2" evidence="1"/>
<dbReference type="EMBL" id="AP009179">
    <property type="protein sequence ID" value="BAF72631.1"/>
    <property type="molecule type" value="Genomic_DNA"/>
</dbReference>
<dbReference type="RefSeq" id="WP_012083441.1">
    <property type="nucleotide sequence ID" value="NC_009663.1"/>
</dbReference>
<dbReference type="SMR" id="A6QAX2"/>
<dbReference type="STRING" id="387093.SUN_1681"/>
<dbReference type="KEGG" id="sun:SUN_1681"/>
<dbReference type="eggNOG" id="COG5405">
    <property type="taxonomic scope" value="Bacteria"/>
</dbReference>
<dbReference type="HOGENOM" id="CLU_093872_1_1_7"/>
<dbReference type="OrthoDB" id="9804884at2"/>
<dbReference type="Proteomes" id="UP000006378">
    <property type="component" value="Chromosome"/>
</dbReference>
<dbReference type="GO" id="GO:0009376">
    <property type="term" value="C:HslUV protease complex"/>
    <property type="evidence" value="ECO:0007669"/>
    <property type="project" value="UniProtKB-UniRule"/>
</dbReference>
<dbReference type="GO" id="GO:0005839">
    <property type="term" value="C:proteasome core complex"/>
    <property type="evidence" value="ECO:0007669"/>
    <property type="project" value="InterPro"/>
</dbReference>
<dbReference type="GO" id="GO:0046872">
    <property type="term" value="F:metal ion binding"/>
    <property type="evidence" value="ECO:0007669"/>
    <property type="project" value="UniProtKB-KW"/>
</dbReference>
<dbReference type="GO" id="GO:0004298">
    <property type="term" value="F:threonine-type endopeptidase activity"/>
    <property type="evidence" value="ECO:0007669"/>
    <property type="project" value="UniProtKB-KW"/>
</dbReference>
<dbReference type="GO" id="GO:0051603">
    <property type="term" value="P:proteolysis involved in protein catabolic process"/>
    <property type="evidence" value="ECO:0007669"/>
    <property type="project" value="InterPro"/>
</dbReference>
<dbReference type="Gene3D" id="3.60.20.10">
    <property type="entry name" value="Glutamine Phosphoribosylpyrophosphate, subunit 1, domain 1"/>
    <property type="match status" value="1"/>
</dbReference>
<dbReference type="HAMAP" id="MF_00248">
    <property type="entry name" value="HslV"/>
    <property type="match status" value="1"/>
</dbReference>
<dbReference type="InterPro" id="IPR022281">
    <property type="entry name" value="ATP-dep_Prtase_HsIV_su"/>
</dbReference>
<dbReference type="InterPro" id="IPR029055">
    <property type="entry name" value="Ntn_hydrolases_N"/>
</dbReference>
<dbReference type="InterPro" id="IPR001353">
    <property type="entry name" value="Proteasome_sua/b"/>
</dbReference>
<dbReference type="InterPro" id="IPR023333">
    <property type="entry name" value="Proteasome_suB-type"/>
</dbReference>
<dbReference type="NCBIfam" id="TIGR03692">
    <property type="entry name" value="ATP_dep_HslV"/>
    <property type="match status" value="1"/>
</dbReference>
<dbReference type="NCBIfam" id="NF003964">
    <property type="entry name" value="PRK05456.1"/>
    <property type="match status" value="1"/>
</dbReference>
<dbReference type="PANTHER" id="PTHR32194:SF0">
    <property type="entry name" value="ATP-DEPENDENT PROTEASE SUBUNIT HSLV"/>
    <property type="match status" value="1"/>
</dbReference>
<dbReference type="PANTHER" id="PTHR32194">
    <property type="entry name" value="METALLOPROTEASE TLDD"/>
    <property type="match status" value="1"/>
</dbReference>
<dbReference type="Pfam" id="PF00227">
    <property type="entry name" value="Proteasome"/>
    <property type="match status" value="1"/>
</dbReference>
<dbReference type="SUPFAM" id="SSF56235">
    <property type="entry name" value="N-terminal nucleophile aminohydrolases (Ntn hydrolases)"/>
    <property type="match status" value="1"/>
</dbReference>
<dbReference type="PROSITE" id="PS51476">
    <property type="entry name" value="PROTEASOME_BETA_2"/>
    <property type="match status" value="1"/>
</dbReference>
<comment type="function">
    <text evidence="1">Protease subunit of a proteasome-like degradation complex believed to be a general protein degrading machinery.</text>
</comment>
<comment type="catalytic activity">
    <reaction evidence="1">
        <text>ATP-dependent cleavage of peptide bonds with broad specificity.</text>
        <dbReference type="EC" id="3.4.25.2"/>
    </reaction>
</comment>
<comment type="activity regulation">
    <text evidence="1">Allosterically activated by HslU binding.</text>
</comment>
<comment type="subunit">
    <text evidence="1">A double ring-shaped homohexamer of HslV is capped on each side by a ring-shaped HslU homohexamer. The assembly of the HslU/HslV complex is dependent on binding of ATP.</text>
</comment>
<comment type="subcellular location">
    <subcellularLocation>
        <location evidence="1">Cytoplasm</location>
    </subcellularLocation>
</comment>
<comment type="similarity">
    <text evidence="1">Belongs to the peptidase T1B family. HslV subfamily.</text>
</comment>